<gene>
    <name type="primary">pgk</name>
    <name type="ordered locus">UU279</name>
</gene>
<evidence type="ECO:0000250" key="1"/>
<evidence type="ECO:0000305" key="2"/>
<dbReference type="EC" id="2.7.2.3"/>
<dbReference type="EMBL" id="AF222894">
    <property type="protein sequence ID" value="AAF30688.1"/>
    <property type="molecule type" value="Genomic_DNA"/>
</dbReference>
<dbReference type="RefSeq" id="WP_006688945.1">
    <property type="nucleotide sequence ID" value="NC_002162.1"/>
</dbReference>
<dbReference type="SMR" id="Q9PQL2"/>
<dbReference type="STRING" id="273119.UU279"/>
<dbReference type="EnsemblBacteria" id="AAF30688">
    <property type="protein sequence ID" value="AAF30688"/>
    <property type="gene ID" value="UU279"/>
</dbReference>
<dbReference type="GeneID" id="29672564"/>
<dbReference type="KEGG" id="uur:UU279"/>
<dbReference type="eggNOG" id="COG0126">
    <property type="taxonomic scope" value="Bacteria"/>
</dbReference>
<dbReference type="HOGENOM" id="CLU_025427_0_1_14"/>
<dbReference type="OrthoDB" id="9808460at2"/>
<dbReference type="UniPathway" id="UPA00109">
    <property type="reaction ID" value="UER00185"/>
</dbReference>
<dbReference type="Proteomes" id="UP000000423">
    <property type="component" value="Chromosome"/>
</dbReference>
<dbReference type="GO" id="GO:0005829">
    <property type="term" value="C:cytosol"/>
    <property type="evidence" value="ECO:0007669"/>
    <property type="project" value="TreeGrafter"/>
</dbReference>
<dbReference type="GO" id="GO:0043531">
    <property type="term" value="F:ADP binding"/>
    <property type="evidence" value="ECO:0007669"/>
    <property type="project" value="TreeGrafter"/>
</dbReference>
<dbReference type="GO" id="GO:0005524">
    <property type="term" value="F:ATP binding"/>
    <property type="evidence" value="ECO:0007669"/>
    <property type="project" value="UniProtKB-KW"/>
</dbReference>
<dbReference type="GO" id="GO:0004618">
    <property type="term" value="F:phosphoglycerate kinase activity"/>
    <property type="evidence" value="ECO:0007669"/>
    <property type="project" value="UniProtKB-EC"/>
</dbReference>
<dbReference type="GO" id="GO:0006094">
    <property type="term" value="P:gluconeogenesis"/>
    <property type="evidence" value="ECO:0007669"/>
    <property type="project" value="TreeGrafter"/>
</dbReference>
<dbReference type="GO" id="GO:0006096">
    <property type="term" value="P:glycolytic process"/>
    <property type="evidence" value="ECO:0007669"/>
    <property type="project" value="UniProtKB-UniPathway"/>
</dbReference>
<dbReference type="FunFam" id="3.40.50.1260:FF:000031">
    <property type="entry name" value="Phosphoglycerate kinase 1"/>
    <property type="match status" value="1"/>
</dbReference>
<dbReference type="Gene3D" id="3.40.50.1260">
    <property type="entry name" value="Phosphoglycerate kinase, N-terminal domain"/>
    <property type="match status" value="2"/>
</dbReference>
<dbReference type="InterPro" id="IPR001576">
    <property type="entry name" value="Phosphoglycerate_kinase"/>
</dbReference>
<dbReference type="InterPro" id="IPR015824">
    <property type="entry name" value="Phosphoglycerate_kinase_N"/>
</dbReference>
<dbReference type="InterPro" id="IPR036043">
    <property type="entry name" value="Phosphoglycerate_kinase_sf"/>
</dbReference>
<dbReference type="PANTHER" id="PTHR11406">
    <property type="entry name" value="PHOSPHOGLYCERATE KINASE"/>
    <property type="match status" value="1"/>
</dbReference>
<dbReference type="PANTHER" id="PTHR11406:SF23">
    <property type="entry name" value="PHOSPHOGLYCERATE KINASE 1, CHLOROPLASTIC-RELATED"/>
    <property type="match status" value="1"/>
</dbReference>
<dbReference type="Pfam" id="PF00162">
    <property type="entry name" value="PGK"/>
    <property type="match status" value="1"/>
</dbReference>
<dbReference type="PIRSF" id="PIRSF000724">
    <property type="entry name" value="Pgk"/>
    <property type="match status" value="1"/>
</dbReference>
<dbReference type="PRINTS" id="PR00477">
    <property type="entry name" value="PHGLYCKINASE"/>
</dbReference>
<dbReference type="SUPFAM" id="SSF53748">
    <property type="entry name" value="Phosphoglycerate kinase"/>
    <property type="match status" value="1"/>
</dbReference>
<comment type="catalytic activity">
    <reaction>
        <text>(2R)-3-phosphoglycerate + ATP = (2R)-3-phospho-glyceroyl phosphate + ADP</text>
        <dbReference type="Rhea" id="RHEA:14801"/>
        <dbReference type="ChEBI" id="CHEBI:30616"/>
        <dbReference type="ChEBI" id="CHEBI:57604"/>
        <dbReference type="ChEBI" id="CHEBI:58272"/>
        <dbReference type="ChEBI" id="CHEBI:456216"/>
        <dbReference type="EC" id="2.7.2.3"/>
    </reaction>
</comment>
<comment type="pathway">
    <text>Carbohydrate degradation; glycolysis; pyruvate from D-glyceraldehyde 3-phosphate: step 2/5.</text>
</comment>
<comment type="subunit">
    <text evidence="1">Monomer.</text>
</comment>
<comment type="subcellular location">
    <subcellularLocation>
        <location evidence="2">Cytoplasm</location>
    </subcellularLocation>
</comment>
<comment type="similarity">
    <text evidence="2">Belongs to the phosphoglycerate kinase family.</text>
</comment>
<sequence length="422" mass="47383">MNSLNKKSIKDLDVNGKTIVLHLDLNVVVDYENKRILNDRKLRASLPTINYLINHNAKIVILSHLGRIKTLADKQSGKYSLEIIVDELRNRVSKNVNRVVFSPLNYGETVVQMVNDLEERDILILENTRYCDISDEGEYVGLEWDGSEILGQFWGMLGDIFIDDAYGVAHRQLSSNYQTAKFAKKSALGFLIVNEINHLDIALEVPKSPYLALIGGNRVADKIAAIEVLCERADQVIIGGGLVYTFLYAQGYNVGLNLVERNMIDDCNNILEKYGKKILICFDFLCNNDFSDTRPIYRKIDEGLEGLYGLDIGKRSLKFIKHEIYRSKTILLNGPFGVIENIKNYAQGTTEICKSMAKQTTRGAYTIICDIDTSSHAEYLGLDKYINFISTGGGASLSYIEEGVLDGLETIDNVPLNVLKKE</sequence>
<proteinExistence type="inferred from homology"/>
<keyword id="KW-0067">ATP-binding</keyword>
<keyword id="KW-0963">Cytoplasm</keyword>
<keyword id="KW-0324">Glycolysis</keyword>
<keyword id="KW-0418">Kinase</keyword>
<keyword id="KW-0547">Nucleotide-binding</keyword>
<keyword id="KW-1185">Reference proteome</keyword>
<keyword id="KW-0808">Transferase</keyword>
<name>PGK_UREPA</name>
<feature type="chain" id="PRO_0000146033" description="Phosphoglycerate kinase">
    <location>
        <begin position="1"/>
        <end position="422"/>
    </location>
</feature>
<feature type="binding site" evidence="1">
    <location>
        <begin position="24"/>
        <end position="26"/>
    </location>
    <ligand>
        <name>substrate</name>
    </ligand>
</feature>
<feature type="binding site" evidence="1">
    <location>
        <begin position="64"/>
        <end position="67"/>
    </location>
    <ligand>
        <name>substrate</name>
    </ligand>
</feature>
<feature type="binding site" evidence="1">
    <location>
        <position position="129"/>
    </location>
    <ligand>
        <name>substrate</name>
    </ligand>
</feature>
<feature type="binding site" evidence="1">
    <location>
        <position position="171"/>
    </location>
    <ligand>
        <name>substrate</name>
    </ligand>
</feature>
<feature type="binding site" evidence="1">
    <location>
        <position position="222"/>
    </location>
    <ligand>
        <name>ATP</name>
        <dbReference type="ChEBI" id="CHEBI:30616"/>
    </ligand>
</feature>
<feature type="binding site" evidence="1">
    <location>
        <position position="309"/>
    </location>
    <ligand>
        <name>ATP</name>
        <dbReference type="ChEBI" id="CHEBI:30616"/>
    </ligand>
</feature>
<feature type="binding site" evidence="1">
    <location>
        <position position="340"/>
    </location>
    <ligand>
        <name>ATP</name>
        <dbReference type="ChEBI" id="CHEBI:30616"/>
    </ligand>
</feature>
<feature type="binding site" evidence="1">
    <location>
        <begin position="370"/>
        <end position="373"/>
    </location>
    <ligand>
        <name>ATP</name>
        <dbReference type="ChEBI" id="CHEBI:30616"/>
    </ligand>
</feature>
<accession>Q9PQL2</accession>
<organism>
    <name type="scientific">Ureaplasma parvum serovar 3 (strain ATCC 700970)</name>
    <dbReference type="NCBI Taxonomy" id="273119"/>
    <lineage>
        <taxon>Bacteria</taxon>
        <taxon>Bacillati</taxon>
        <taxon>Mycoplasmatota</taxon>
        <taxon>Mycoplasmoidales</taxon>
        <taxon>Mycoplasmoidaceae</taxon>
        <taxon>Ureaplasma</taxon>
    </lineage>
</organism>
<reference key="1">
    <citation type="journal article" date="2000" name="Nature">
        <title>The complete sequence of the mucosal pathogen Ureaplasma urealyticum.</title>
        <authorList>
            <person name="Glass J.I."/>
            <person name="Lefkowitz E.J."/>
            <person name="Glass J.S."/>
            <person name="Heiner C.R."/>
            <person name="Chen E.Y."/>
            <person name="Cassell G.H."/>
        </authorList>
    </citation>
    <scope>NUCLEOTIDE SEQUENCE [LARGE SCALE GENOMIC DNA]</scope>
    <source>
        <strain>ATCC 700970</strain>
    </source>
</reference>
<protein>
    <recommendedName>
        <fullName>Phosphoglycerate kinase</fullName>
        <ecNumber>2.7.2.3</ecNumber>
    </recommendedName>
</protein>